<dbReference type="EMBL" id="AF022465">
    <property type="protein sequence ID" value="AAC16925.1"/>
    <property type="molecule type" value="mRNA"/>
</dbReference>
<dbReference type="EMBL" id="BC011276">
    <property type="protein sequence ID" value="AAH11276.1"/>
    <property type="molecule type" value="mRNA"/>
</dbReference>
<dbReference type="EMBL" id="BC083352">
    <property type="protein sequence ID" value="AAH83352.1"/>
    <property type="molecule type" value="mRNA"/>
</dbReference>
<dbReference type="CCDS" id="CCDS30180.1"/>
<dbReference type="RefSeq" id="NP_001280552.1">
    <property type="nucleotide sequence ID" value="NM_001293623.2"/>
</dbReference>
<dbReference type="RefSeq" id="NP_001280553.1">
    <property type="nucleotide sequence ID" value="NM_001293624.2"/>
</dbReference>
<dbReference type="RefSeq" id="NP_001280554.1">
    <property type="nucleotide sequence ID" value="NM_001293625.2"/>
</dbReference>
<dbReference type="RefSeq" id="NP_001398224.1">
    <property type="nucleotide sequence ID" value="NM_001411295.1"/>
</dbReference>
<dbReference type="RefSeq" id="NP_001398225.1">
    <property type="nucleotide sequence ID" value="NM_001411296.1"/>
</dbReference>
<dbReference type="RefSeq" id="NP_001398228.1">
    <property type="nucleotide sequence ID" value="NM_001411299.1"/>
</dbReference>
<dbReference type="RefSeq" id="NP_032279.1">
    <property type="nucleotide sequence ID" value="NM_008253.5"/>
</dbReference>
<dbReference type="RefSeq" id="XP_006527905.1">
    <property type="nucleotide sequence ID" value="XM_006527842.5"/>
</dbReference>
<dbReference type="SMR" id="O54879"/>
<dbReference type="BioGRID" id="200336">
    <property type="interactions" value="6"/>
</dbReference>
<dbReference type="FunCoup" id="O54879">
    <property type="interactions" value="1349"/>
</dbReference>
<dbReference type="STRING" id="10090.ENSMUSP00000110229"/>
<dbReference type="GlyGen" id="O54879">
    <property type="glycosylation" value="1 site, 1 N-linked glycan (1 site)"/>
</dbReference>
<dbReference type="iPTMnet" id="O54879"/>
<dbReference type="PhosphoSitePlus" id="O54879"/>
<dbReference type="jPOST" id="O54879"/>
<dbReference type="PaxDb" id="10090-ENSMUSP00000110229"/>
<dbReference type="PeptideAtlas" id="O54879"/>
<dbReference type="ProteomicsDB" id="273116"/>
<dbReference type="Pumba" id="O54879"/>
<dbReference type="Antibodypedia" id="17019">
    <property type="antibodies" value="292 antibodies from 35 providers"/>
</dbReference>
<dbReference type="DNASU" id="15354"/>
<dbReference type="Ensembl" id="ENSMUST00000015361.11">
    <property type="protein sequence ID" value="ENSMUSP00000015361.5"/>
    <property type="gene ID" value="ENSMUSG00000015217.12"/>
</dbReference>
<dbReference type="Ensembl" id="ENSMUST00000072699.13">
    <property type="protein sequence ID" value="ENSMUSP00000110232.3"/>
    <property type="gene ID" value="ENSMUSG00000015217.12"/>
</dbReference>
<dbReference type="Ensembl" id="ENSMUST00000088874.10">
    <property type="protein sequence ID" value="ENSMUSP00000086260.4"/>
    <property type="gene ID" value="ENSMUSG00000015217.12"/>
</dbReference>
<dbReference type="Ensembl" id="ENSMUST00000114582.9">
    <property type="protein sequence ID" value="ENSMUSP00000110229.3"/>
    <property type="gene ID" value="ENSMUSG00000015217.12"/>
</dbReference>
<dbReference type="GeneID" id="15354"/>
<dbReference type="KEGG" id="mmu:15354"/>
<dbReference type="UCSC" id="uc009tkb.2">
    <property type="organism name" value="mouse"/>
</dbReference>
<dbReference type="AGR" id="MGI:1098219"/>
<dbReference type="CTD" id="3149"/>
<dbReference type="MGI" id="MGI:1098219">
    <property type="gene designation" value="Hmgb3"/>
</dbReference>
<dbReference type="VEuPathDB" id="HostDB:ENSMUSG00000015217"/>
<dbReference type="eggNOG" id="KOG0381">
    <property type="taxonomic scope" value="Eukaryota"/>
</dbReference>
<dbReference type="GeneTree" id="ENSGT00940000153299"/>
<dbReference type="InParanoid" id="O54879"/>
<dbReference type="OMA" id="DPAYENQ"/>
<dbReference type="OrthoDB" id="1919336at2759"/>
<dbReference type="PhylomeDB" id="O54879"/>
<dbReference type="TreeFam" id="TF105371"/>
<dbReference type="BioGRID-ORCS" id="15354">
    <property type="hits" value="9 hits in 46 CRISPR screens"/>
</dbReference>
<dbReference type="ChiTaRS" id="Hmgb3">
    <property type="organism name" value="mouse"/>
</dbReference>
<dbReference type="PRO" id="PR:O54879"/>
<dbReference type="Proteomes" id="UP000000589">
    <property type="component" value="Chromosome X"/>
</dbReference>
<dbReference type="RNAct" id="O54879">
    <property type="molecule type" value="protein"/>
</dbReference>
<dbReference type="Bgee" id="ENSMUSG00000015217">
    <property type="expression patterns" value="Expressed in ventricular zone and 87 other cell types or tissues"/>
</dbReference>
<dbReference type="ExpressionAtlas" id="O54879">
    <property type="expression patterns" value="baseline and differential"/>
</dbReference>
<dbReference type="GO" id="GO:0005694">
    <property type="term" value="C:chromosome"/>
    <property type="evidence" value="ECO:0007669"/>
    <property type="project" value="UniProtKB-SubCell"/>
</dbReference>
<dbReference type="GO" id="GO:0005737">
    <property type="term" value="C:cytoplasm"/>
    <property type="evidence" value="ECO:0007669"/>
    <property type="project" value="UniProtKB-SubCell"/>
</dbReference>
<dbReference type="GO" id="GO:0005634">
    <property type="term" value="C:nucleus"/>
    <property type="evidence" value="ECO:0000314"/>
    <property type="project" value="MGI"/>
</dbReference>
<dbReference type="GO" id="GO:0003677">
    <property type="term" value="F:DNA binding"/>
    <property type="evidence" value="ECO:0000314"/>
    <property type="project" value="UniProtKB"/>
</dbReference>
<dbReference type="GO" id="GO:0008301">
    <property type="term" value="F:DNA binding, bending"/>
    <property type="evidence" value="ECO:0000250"/>
    <property type="project" value="AgBase"/>
</dbReference>
<dbReference type="GO" id="GO:0000400">
    <property type="term" value="F:four-way junction DNA binding"/>
    <property type="evidence" value="ECO:0000250"/>
    <property type="project" value="AgBase"/>
</dbReference>
<dbReference type="GO" id="GO:0003723">
    <property type="term" value="F:RNA binding"/>
    <property type="evidence" value="ECO:0000314"/>
    <property type="project" value="UniProtKB"/>
</dbReference>
<dbReference type="GO" id="GO:0032392">
    <property type="term" value="P:DNA geometric change"/>
    <property type="evidence" value="ECO:0000250"/>
    <property type="project" value="AgBase"/>
</dbReference>
<dbReference type="GO" id="GO:0045087">
    <property type="term" value="P:innate immune response"/>
    <property type="evidence" value="ECO:0007669"/>
    <property type="project" value="UniProtKB-KW"/>
</dbReference>
<dbReference type="GO" id="GO:0045578">
    <property type="term" value="P:negative regulation of B cell differentiation"/>
    <property type="evidence" value="ECO:0000314"/>
    <property type="project" value="MGI"/>
</dbReference>
<dbReference type="GO" id="GO:0045638">
    <property type="term" value="P:negative regulation of myeloid cell differentiation"/>
    <property type="evidence" value="ECO:0000314"/>
    <property type="project" value="MGI"/>
</dbReference>
<dbReference type="CDD" id="cd21978">
    <property type="entry name" value="HMG-box_HMGB_rpt1"/>
    <property type="match status" value="1"/>
</dbReference>
<dbReference type="CDD" id="cd21979">
    <property type="entry name" value="HMG-box_HMGB_rpt2"/>
    <property type="match status" value="1"/>
</dbReference>
<dbReference type="FunFam" id="1.10.30.10:FF:000013">
    <property type="entry name" value="High mobility group protein B3"/>
    <property type="match status" value="1"/>
</dbReference>
<dbReference type="FunFam" id="1.10.30.10:FF:000017">
    <property type="entry name" value="high mobility group protein B3"/>
    <property type="match status" value="1"/>
</dbReference>
<dbReference type="Gene3D" id="1.10.30.10">
    <property type="entry name" value="High mobility group box domain"/>
    <property type="match status" value="2"/>
</dbReference>
<dbReference type="InterPro" id="IPR009071">
    <property type="entry name" value="HMG_box_dom"/>
</dbReference>
<dbReference type="InterPro" id="IPR036910">
    <property type="entry name" value="HMG_box_dom_sf"/>
</dbReference>
<dbReference type="InterPro" id="IPR017967">
    <property type="entry name" value="HMG_boxA_CS"/>
</dbReference>
<dbReference type="InterPro" id="IPR050342">
    <property type="entry name" value="HMGB"/>
</dbReference>
<dbReference type="PANTHER" id="PTHR48112:SF32">
    <property type="entry name" value="HIGH MOBILITY GROUP PROTEIN B3"/>
    <property type="match status" value="1"/>
</dbReference>
<dbReference type="PANTHER" id="PTHR48112">
    <property type="entry name" value="HIGH MOBILITY GROUP PROTEIN DSP1"/>
    <property type="match status" value="1"/>
</dbReference>
<dbReference type="Pfam" id="PF00505">
    <property type="entry name" value="HMG_box"/>
    <property type="match status" value="1"/>
</dbReference>
<dbReference type="Pfam" id="PF09011">
    <property type="entry name" value="HMG_box_2"/>
    <property type="match status" value="1"/>
</dbReference>
<dbReference type="PRINTS" id="PR00886">
    <property type="entry name" value="HIGHMOBLTY12"/>
</dbReference>
<dbReference type="SMART" id="SM00398">
    <property type="entry name" value="HMG"/>
    <property type="match status" value="2"/>
</dbReference>
<dbReference type="SUPFAM" id="SSF47095">
    <property type="entry name" value="HMG-box"/>
    <property type="match status" value="2"/>
</dbReference>
<dbReference type="PROSITE" id="PS00353">
    <property type="entry name" value="HMG_BOX_1"/>
    <property type="match status" value="1"/>
</dbReference>
<dbReference type="PROSITE" id="PS50118">
    <property type="entry name" value="HMG_BOX_2"/>
    <property type="match status" value="2"/>
</dbReference>
<comment type="function">
    <text evidence="1 3 8 9 10 11">Multifunctional protein with various roles in different cellular compartments. May act in a redox sensitive manner. Associates with chromatin and binds DNA with a preference for non-canonical DNA structures such as single-stranded DNA. Can bend DNA and enhance DNA flexibility by looping thus providing a mechanism to promote activities on various gene promoters (By similarity). Proposed to be involved in the innate immune response to nucleic acids by acting as a cytoplasmic promiscuous immunogenic DNA/RNA sensor (PubMed:19890330). Negatively regulates B-cell and myeloid cell differentiation. In hematopoietic stem cells may regulate the balance between self-renewal and differentiation. Involved in negative regulation of canonical Wnt signaling (PubMed:12714519, PubMed:15358624, PubMed:16945912).</text>
</comment>
<comment type="subcellular location">
    <subcellularLocation>
        <location evidence="3 6">Nucleus</location>
    </subcellularLocation>
    <subcellularLocation>
        <location evidence="12">Chromosome</location>
    </subcellularLocation>
    <subcellularLocation>
        <location evidence="11">Cytoplasm</location>
    </subcellularLocation>
</comment>
<comment type="tissue specificity">
    <text evidence="8">Expressed in bone marrow cells, specifically in primitive Lin-, c-kit+, Sca-1+, IL-7Ralpha- cells, and Ter119+ erythroid cells (PubMed:12714519).</text>
</comment>
<comment type="developmental stage">
    <text>Highly expressed in the embryo; barely detectable in the adult stage.</text>
</comment>
<comment type="PTM">
    <text evidence="1">Reduction/oxidation of cysteine residues Cys-23, Cys-45 and Cys-104 and a possible intramolecular disulfide bond involving Cys-23 and Cys-45 give rise to different redox forms with specific functional activities in various cellular compartments: 1- fully reduced HMGB3 (HMGB3C23hC45hC104h), 2- disulfide HMGB3 (HMGB3C23-C45C104h) and 3- sulfonyl HMGB3 (HMGB3C23soC45soC104so).</text>
</comment>
<comment type="similarity">
    <text evidence="12">Belongs to the HMGB family.</text>
</comment>
<keyword id="KW-0007">Acetylation</keyword>
<keyword id="KW-0158">Chromosome</keyword>
<keyword id="KW-0963">Cytoplasm</keyword>
<keyword id="KW-1015">Disulfide bond</keyword>
<keyword id="KW-0238">DNA-binding</keyword>
<keyword id="KW-0391">Immunity</keyword>
<keyword id="KW-0399">Innate immunity</keyword>
<keyword id="KW-0539">Nucleus</keyword>
<keyword id="KW-0558">Oxidation</keyword>
<keyword id="KW-0597">Phosphoprotein</keyword>
<keyword id="KW-1185">Reference proteome</keyword>
<keyword id="KW-0677">Repeat</keyword>
<keyword id="KW-0804">Transcription</keyword>
<keyword id="KW-0805">Transcription regulation</keyword>
<evidence type="ECO:0000250" key="1">
    <source>
        <dbReference type="UniProtKB" id="P09429"/>
    </source>
</evidence>
<evidence type="ECO:0000250" key="2">
    <source>
        <dbReference type="UniProtKB" id="P30681"/>
    </source>
</evidence>
<evidence type="ECO:0000250" key="3">
    <source>
        <dbReference type="UniProtKB" id="P40618"/>
    </source>
</evidence>
<evidence type="ECO:0000250" key="4">
    <source>
        <dbReference type="UniProtKB" id="P63158"/>
    </source>
</evidence>
<evidence type="ECO:0000250" key="5">
    <source>
        <dbReference type="UniProtKB" id="P63159"/>
    </source>
</evidence>
<evidence type="ECO:0000255" key="6">
    <source>
        <dbReference type="PROSITE-ProRule" id="PRU00267"/>
    </source>
</evidence>
<evidence type="ECO:0000256" key="7">
    <source>
        <dbReference type="SAM" id="MobiDB-lite"/>
    </source>
</evidence>
<evidence type="ECO:0000269" key="8">
    <source>
    </source>
</evidence>
<evidence type="ECO:0000269" key="9">
    <source>
    </source>
</evidence>
<evidence type="ECO:0000269" key="10">
    <source>
    </source>
</evidence>
<evidence type="ECO:0000269" key="11">
    <source>
    </source>
</evidence>
<evidence type="ECO:0000305" key="12"/>
<sequence>MAKGDPKKPKGKMSAYAFFVQTCREEHKKKNPEVPVNFAEFSKKCSERWKTMSSKEKSKFDEMAKADKVRYDREMKDYGPAKGGKKKKDPNAPKRPPSGFFLFCSEFRPKIKSTNPGISIGDVAKKLGEMWNNLSDNEKQPYVTKAAKLKEKYEKDVADYKSKGKFDGAKGPAKVARKKVEEEEEEEEEEEEEEEEEEDE</sequence>
<protein>
    <recommendedName>
        <fullName>High mobility group protein B3</fullName>
    </recommendedName>
    <alternativeName>
        <fullName>High mobility group protein 2a</fullName>
        <shortName>HMG-2a</shortName>
    </alternativeName>
    <alternativeName>
        <fullName>High mobility group protein 4</fullName>
        <shortName>HMG-4</shortName>
    </alternativeName>
</protein>
<accession>O54879</accession>
<reference key="1">
    <citation type="journal article" date="1998" name="Genomics">
        <title>Hmg4, a new member of the Hmg1/2 gene family.</title>
        <authorList>
            <person name="Vaccari T."/>
            <person name="Beltrame M."/>
            <person name="Ferrari S."/>
            <person name="Bianchi M.E."/>
        </authorList>
    </citation>
    <scope>NUCLEOTIDE SEQUENCE [MRNA]</scope>
    <source>
        <strain>129/Sv</strain>
    </source>
</reference>
<reference key="2">
    <citation type="journal article" date="2004" name="Genome Res.">
        <title>The status, quality, and expansion of the NIH full-length cDNA project: the Mammalian Gene Collection (MGC).</title>
        <authorList>
            <consortium name="The MGC Project Team"/>
        </authorList>
    </citation>
    <scope>NUCLEOTIDE SEQUENCE [LARGE SCALE MRNA]</scope>
    <source>
        <strain>C57BL/6J</strain>
        <tissue>Eye</tissue>
    </source>
</reference>
<reference key="3">
    <citation type="journal article" date="2003" name="Blood">
        <title>Hmgb3: an HMG-box family member expressed in primitive hematopoietic cells that inhibits myeloid and B-cell differentiation.</title>
        <authorList>
            <person name="Nemeth M.J."/>
            <person name="Curtis D.J."/>
            <person name="Kirby M.R."/>
            <person name="Garrett-Beal L.J."/>
            <person name="Seidel N.E."/>
            <person name="Cline A.P."/>
            <person name="Bodine D.M."/>
        </authorList>
    </citation>
    <scope>FUNCTION</scope>
    <scope>TISSUE SPECIFICITY</scope>
</reference>
<reference key="4">
    <citation type="journal article" date="2005" name="Blood">
        <title>Hmgb3 deficiency deregulates proliferation and differentiation of common lymphoid and myeloid progenitors.</title>
        <authorList>
            <person name="Nemeth M.J."/>
            <person name="Cline A.P."/>
            <person name="Anderson S.M."/>
            <person name="Garrett-Beal L.J."/>
            <person name="Bodine D.M."/>
        </authorList>
    </citation>
    <scope>FUNCTION</scope>
</reference>
<reference key="5">
    <citation type="journal article" date="2009" name="Nature">
        <title>HMGB proteins function as universal sentinels for nucleic-acid-mediated innate immune responses.</title>
        <authorList>
            <person name="Yanai H."/>
            <person name="Ban T."/>
            <person name="Wang Z."/>
            <person name="Choi M.K."/>
            <person name="Kawamura T."/>
            <person name="Negishi H."/>
            <person name="Nakasato M."/>
            <person name="Lu Y."/>
            <person name="Hangai S."/>
            <person name="Koshiba R."/>
            <person name="Savitsky D."/>
            <person name="Ronfani L."/>
            <person name="Akira S."/>
            <person name="Bianchi M.E."/>
            <person name="Honda K."/>
            <person name="Tamura T."/>
            <person name="Kodama T."/>
            <person name="Taniguchi T."/>
        </authorList>
    </citation>
    <scope>FUNCTION</scope>
    <scope>SUBCELLULAR LOCATION</scope>
</reference>
<reference key="6">
    <citation type="journal article" date="2006" name="Proc. Natl. Acad. Sci. U.S.A.">
        <title>Hmgb3 regulates the balance between hematopoietic stem cell self-renewal and differentiation.</title>
        <authorList>
            <person name="Nemeth M.J."/>
            <person name="Kirby M.R."/>
            <person name="Bodine D.M."/>
        </authorList>
    </citation>
    <scope>FUNCTION</scope>
</reference>
<reference key="7">
    <citation type="journal article" date="2010" name="Cell">
        <title>A tissue-specific atlas of mouse protein phosphorylation and expression.</title>
        <authorList>
            <person name="Huttlin E.L."/>
            <person name="Jedrychowski M.P."/>
            <person name="Elias J.E."/>
            <person name="Goswami T."/>
            <person name="Rad R."/>
            <person name="Beausoleil S.A."/>
            <person name="Villen J."/>
            <person name="Haas W."/>
            <person name="Sowa M.E."/>
            <person name="Gygi S.P."/>
        </authorList>
    </citation>
    <scope>IDENTIFICATION BY MASS SPECTROMETRY [LARGE SCALE ANALYSIS]</scope>
    <source>
        <tissue>Brain</tissue>
        <tissue>Brown adipose tissue</tissue>
        <tissue>Heart</tissue>
        <tissue>Kidney</tissue>
        <tissue>Lung</tissue>
        <tissue>Pancreas</tissue>
        <tissue>Spleen</tissue>
        <tissue>Testis</tissue>
    </source>
</reference>
<feature type="chain" id="PRO_0000048540" description="High mobility group protein B3">
    <location>
        <begin position="1"/>
        <end position="200"/>
    </location>
</feature>
<feature type="DNA-binding region" description="HMG box 1" evidence="6">
    <location>
        <begin position="9"/>
        <end position="79"/>
    </location>
</feature>
<feature type="DNA-binding region" description="HMG box 2" evidence="6">
    <location>
        <begin position="93"/>
        <end position="161"/>
    </location>
</feature>
<feature type="region of interest" description="Disordered" evidence="7">
    <location>
        <begin position="71"/>
        <end position="97"/>
    </location>
</feature>
<feature type="region of interest" description="Disordered" evidence="7">
    <location>
        <begin position="161"/>
        <end position="200"/>
    </location>
</feature>
<feature type="compositionally biased region" description="Acidic residues" evidence="7">
    <location>
        <begin position="182"/>
        <end position="200"/>
    </location>
</feature>
<feature type="modified residue" description="N6-acetyllysine" evidence="5">
    <location>
        <position position="3"/>
    </location>
</feature>
<feature type="modified residue" description="Cysteine sulfonic acid (-SO3H); alternate" evidence="5">
    <location>
        <position position="23"/>
    </location>
</feature>
<feature type="modified residue" description="N6-acetyllysine" evidence="1">
    <location>
        <position position="30"/>
    </location>
</feature>
<feature type="modified residue" description="N6-acetyllysine" evidence="4">
    <location>
        <position position="43"/>
    </location>
</feature>
<feature type="modified residue" description="Cysteine sulfonic acid (-SO3H); alternate" evidence="5">
    <location>
        <position position="45"/>
    </location>
</feature>
<feature type="modified residue" description="Phosphoserine" evidence="1">
    <location>
        <position position="98"/>
    </location>
</feature>
<feature type="modified residue" description="Cysteine sulfonic acid (-SO3H)" evidence="5">
    <location>
        <position position="104"/>
    </location>
</feature>
<feature type="modified residue" description="N6-acetyllysine" evidence="2">
    <location>
        <position position="112"/>
    </location>
</feature>
<feature type="modified residue" description="N6-acetyllysine" evidence="4">
    <location>
        <position position="139"/>
    </location>
</feature>
<feature type="disulfide bond" description="In disulfide HMGB3; alternate" evidence="5">
    <location>
        <begin position="23"/>
        <end position="45"/>
    </location>
</feature>
<name>HMGB3_MOUSE</name>
<organism>
    <name type="scientific">Mus musculus</name>
    <name type="common">Mouse</name>
    <dbReference type="NCBI Taxonomy" id="10090"/>
    <lineage>
        <taxon>Eukaryota</taxon>
        <taxon>Metazoa</taxon>
        <taxon>Chordata</taxon>
        <taxon>Craniata</taxon>
        <taxon>Vertebrata</taxon>
        <taxon>Euteleostomi</taxon>
        <taxon>Mammalia</taxon>
        <taxon>Eutheria</taxon>
        <taxon>Euarchontoglires</taxon>
        <taxon>Glires</taxon>
        <taxon>Rodentia</taxon>
        <taxon>Myomorpha</taxon>
        <taxon>Muroidea</taxon>
        <taxon>Muridae</taxon>
        <taxon>Murinae</taxon>
        <taxon>Mus</taxon>
        <taxon>Mus</taxon>
    </lineage>
</organism>
<gene>
    <name type="primary">Hmgb3</name>
    <name type="synonym">Hmg2a</name>
    <name type="synonym">Hmg4</name>
</gene>
<proteinExistence type="evidence at protein level"/>